<reference key="1">
    <citation type="journal article" date="1963" name="Biochim. Biophys. Acta">
        <title>On trypsinogen and trypsin of pig.</title>
        <authorList>
            <person name="Charles M."/>
            <person name="Rovery M."/>
            <person name="Guidoni A.A."/>
            <person name="Desnuelle P."/>
        </authorList>
    </citation>
    <scope>PROTEIN SEQUENCE OF 1-10</scope>
</reference>
<reference key="2">
    <citation type="journal article" date="1973" name="Biochemistry">
        <title>Determination of the amino acid sequence of porcine trypsin by sequenator analysis.</title>
        <authorList>
            <person name="Hermodson M.A."/>
            <person name="Ericsson L.H."/>
            <person name="Neurath H."/>
            <person name="Walsh K.A."/>
        </authorList>
    </citation>
    <scope>PROTEIN SEQUENCE OF 9-231</scope>
</reference>
<reference key="3">
    <citation type="journal article" date="1993" name="J. Mol. Biol.">
        <title>Refined 1.6-A resolution crystal structure of the complex formed between porcine beta-trypsin and MCTI-A, a trypsin inhibitor of the squash family. Detailed comparison with bovine beta-trypsin and its complex.</title>
        <authorList>
            <person name="Huang Q."/>
            <person name="Liu S."/>
            <person name="Tang Y."/>
        </authorList>
    </citation>
    <scope>X-RAY CRYSTALLOGRAPHY (1.6 ANGSTROMS)</scope>
</reference>
<reference key="4">
    <citation type="journal article" date="1992" name="FEBS Lett.">
        <title>Amino acid sequencing of a trypsin inhibitor by refined 1.6 A X-ray crystal structure of its complex with porcine beta-trypsin.</title>
        <authorList>
            <person name="Huang Q."/>
            <person name="Liu S."/>
            <person name="Tang Y."/>
            <person name="Zeng F."/>
            <person name="Qian R."/>
        </authorList>
    </citation>
    <scope>X-RAY CRYSTALLOGRAPHY (1.6 ANGSTROMS)</scope>
</reference>
<reference key="5">
    <citation type="journal article" date="1994" name="Biochim. Biophys. Acta">
        <title>Refined 1.8-A resolution crystal structure of the porcine epsilon-trypsin.</title>
        <authorList>
            <person name="Huang Q."/>
            <person name="Wang Z."/>
            <person name="Li Y."/>
            <person name="Liu S."/>
            <person name="Tang Y."/>
        </authorList>
    </citation>
    <scope>X-RAY CRYSTALLOGRAPHY (1.8 ANGSTROMS)</scope>
</reference>
<reference key="6">
    <citation type="journal article" date="1997" name="J. Biol. Chem.">
        <title>The three-dimensional structure of recombinant leech-derived tryptase inhibitor in complex with trypsin. Implications for the structure of human mast cell tryptase and its inhibition.</title>
        <authorList>
            <person name="Stubbs M.T."/>
            <person name="Morenweiser R."/>
            <person name="Stuerzebecher J."/>
            <person name="Bauer M."/>
            <person name="Bode W."/>
            <person name="Huber R."/>
            <person name="Piechottka G.P."/>
            <person name="Matschiner G."/>
            <person name="Sommerhoff C.P."/>
            <person name="Fritz H."/>
            <person name="Auerswald E.A."/>
        </authorList>
    </citation>
    <scope>X-RAY CRYSTALLOGRAPHY (1.9 ANGSTROMS) OF COMPLEX WITH LDTI</scope>
</reference>
<reference key="7">
    <citation type="journal article" date="1997" name="Structure">
        <title>Structure of the complex of leech-derived tryptase inhibitor (LDTI) with trypsin and modeling of the LDTI-tryptase system.</title>
        <authorList>
            <person name="di Marco S."/>
            <person name="Priestle J.P."/>
        </authorList>
    </citation>
    <scope>X-RAY CRYSTALLOGRAPHY (2.03 ANGSTROMS) OF COMPLEX WITH LDTI</scope>
</reference>
<reference key="8">
    <citation type="journal article" date="2000" name="Acta Crystallogr. D">
        <title>L-isoaspartate 115 of porcine beta-trypsin promotes crystallization of its complex with bdellastasin.</title>
        <authorList>
            <person name="Rester U."/>
            <person name="Moser M."/>
            <person name="Huber R."/>
            <person name="Bode W."/>
        </authorList>
    </citation>
    <scope>X-RAY CRYSTALLOGRAPHY (2.7 ANGSTROMS) OF COMPLEX WITH BDELLASTASIN</scope>
</reference>
<name>TRYP_PIG</name>
<feature type="propeptide" id="PRO_0000028205" description="Activation peptide" evidence="3">
    <location>
        <begin position="1"/>
        <end position="8"/>
    </location>
</feature>
<feature type="chain" id="PRO_0000028206" description="Trypsin">
    <location>
        <begin position="9"/>
        <end position="231"/>
    </location>
</feature>
<feature type="domain" description="Peptidase S1" evidence="2">
    <location>
        <begin position="9"/>
        <end position="229"/>
    </location>
</feature>
<feature type="active site" description="Charge relay system">
    <location>
        <position position="48"/>
    </location>
</feature>
<feature type="active site" description="Charge relay system">
    <location>
        <position position="92"/>
    </location>
</feature>
<feature type="active site" description="Charge relay system">
    <location>
        <position position="185"/>
    </location>
</feature>
<feature type="binding site">
    <location>
        <position position="60"/>
    </location>
    <ligand>
        <name>Ca(2+)</name>
        <dbReference type="ChEBI" id="CHEBI:29108"/>
    </ligand>
</feature>
<feature type="binding site">
    <location>
        <position position="62"/>
    </location>
    <ligand>
        <name>Ca(2+)</name>
        <dbReference type="ChEBI" id="CHEBI:29108"/>
    </ligand>
</feature>
<feature type="binding site">
    <location>
        <position position="65"/>
    </location>
    <ligand>
        <name>Ca(2+)</name>
        <dbReference type="ChEBI" id="CHEBI:29108"/>
    </ligand>
</feature>
<feature type="binding site">
    <location>
        <position position="70"/>
    </location>
    <ligand>
        <name>Ca(2+)</name>
        <dbReference type="ChEBI" id="CHEBI:29108"/>
    </ligand>
</feature>
<feature type="site" description="Required for specificity" evidence="1">
    <location>
        <position position="179"/>
    </location>
</feature>
<feature type="disulfide bond">
    <location>
        <begin position="15"/>
        <end position="145"/>
    </location>
</feature>
<feature type="disulfide bond">
    <location>
        <begin position="33"/>
        <end position="49"/>
    </location>
</feature>
<feature type="disulfide bond">
    <location>
        <begin position="117"/>
        <end position="218"/>
    </location>
</feature>
<feature type="disulfide bond">
    <location>
        <begin position="124"/>
        <end position="191"/>
    </location>
</feature>
<feature type="disulfide bond">
    <location>
        <begin position="156"/>
        <end position="170"/>
    </location>
</feature>
<feature type="disulfide bond">
    <location>
        <begin position="181"/>
        <end position="205"/>
    </location>
</feature>
<feature type="sequence variant">
    <original>I</original>
    <variation>V</variation>
    <location>
        <position position="20"/>
    </location>
</feature>
<feature type="strand" evidence="5">
    <location>
        <begin position="23"/>
        <end position="39"/>
    </location>
</feature>
<feature type="strand" evidence="5">
    <location>
        <begin position="42"/>
        <end position="45"/>
    </location>
</feature>
<feature type="helix" evidence="5">
    <location>
        <begin position="47"/>
        <end position="49"/>
    </location>
</feature>
<feature type="strand" evidence="5">
    <location>
        <begin position="55"/>
        <end position="59"/>
    </location>
</feature>
<feature type="strand" evidence="7">
    <location>
        <begin position="61"/>
        <end position="65"/>
    </location>
</feature>
<feature type="strand" evidence="5">
    <location>
        <begin position="71"/>
        <end position="80"/>
    </location>
</feature>
<feature type="turn" evidence="5">
    <location>
        <begin position="86"/>
        <end position="88"/>
    </location>
</feature>
<feature type="strand" evidence="5">
    <location>
        <begin position="94"/>
        <end position="100"/>
    </location>
</feature>
<feature type="strand" evidence="5">
    <location>
        <begin position="105"/>
        <end position="108"/>
    </location>
</feature>
<feature type="strand" evidence="5">
    <location>
        <begin position="123"/>
        <end position="130"/>
    </location>
</feature>
<feature type="strand" evidence="5">
    <location>
        <begin position="134"/>
        <end position="136"/>
    </location>
</feature>
<feature type="strand" evidence="5">
    <location>
        <begin position="144"/>
        <end position="150"/>
    </location>
</feature>
<feature type="helix" evidence="5">
    <location>
        <begin position="153"/>
        <end position="159"/>
    </location>
</feature>
<feature type="turn" evidence="5">
    <location>
        <begin position="161"/>
        <end position="163"/>
    </location>
</feature>
<feature type="strand" evidence="5">
    <location>
        <begin position="168"/>
        <end position="172"/>
    </location>
</feature>
<feature type="strand" evidence="6">
    <location>
        <begin position="174"/>
        <end position="177"/>
    </location>
</feature>
<feature type="turn" evidence="4">
    <location>
        <begin position="182"/>
        <end position="186"/>
    </location>
</feature>
<feature type="strand" evidence="5">
    <location>
        <begin position="188"/>
        <end position="191"/>
    </location>
</feature>
<feature type="strand" evidence="5">
    <location>
        <begin position="194"/>
        <end position="201"/>
    </location>
</feature>
<feature type="strand" evidence="5">
    <location>
        <begin position="203"/>
        <end position="206"/>
    </location>
</feature>
<feature type="strand" evidence="5">
    <location>
        <begin position="212"/>
        <end position="216"/>
    </location>
</feature>
<feature type="helix" evidence="5">
    <location>
        <begin position="217"/>
        <end position="219"/>
    </location>
</feature>
<feature type="helix" evidence="5">
    <location>
        <begin position="221"/>
        <end position="230"/>
    </location>
</feature>
<comment type="catalytic activity">
    <reaction>
        <text>Preferential cleavage: Arg-|-Xaa, Lys-|-Xaa.</text>
        <dbReference type="EC" id="3.4.21.4"/>
    </reaction>
</comment>
<comment type="cofactor">
    <cofactor>
        <name>Ca(2+)</name>
        <dbReference type="ChEBI" id="CHEBI:29108"/>
    </cofactor>
    <text>Binds 1 Ca(2+) ion per subunit.</text>
</comment>
<comment type="subcellular location">
    <subcellularLocation>
        <location>Secreted</location>
        <location>Extracellular space</location>
    </subcellularLocation>
</comment>
<comment type="similarity">
    <text evidence="2">Belongs to the peptidase S1 family.</text>
</comment>
<organism>
    <name type="scientific">Sus scrofa</name>
    <name type="common">Pig</name>
    <dbReference type="NCBI Taxonomy" id="9823"/>
    <lineage>
        <taxon>Eukaryota</taxon>
        <taxon>Metazoa</taxon>
        <taxon>Chordata</taxon>
        <taxon>Craniata</taxon>
        <taxon>Vertebrata</taxon>
        <taxon>Euteleostomi</taxon>
        <taxon>Mammalia</taxon>
        <taxon>Eutheria</taxon>
        <taxon>Laurasiatheria</taxon>
        <taxon>Artiodactyla</taxon>
        <taxon>Suina</taxon>
        <taxon>Suidae</taxon>
        <taxon>Sus</taxon>
    </lineage>
</organism>
<evidence type="ECO:0000250" key="1"/>
<evidence type="ECO:0000255" key="2">
    <source>
        <dbReference type="PROSITE-ProRule" id="PRU00274"/>
    </source>
</evidence>
<evidence type="ECO:0000269" key="3">
    <source>
    </source>
</evidence>
<evidence type="ECO:0007829" key="4">
    <source>
        <dbReference type="PDB" id="1S6H"/>
    </source>
</evidence>
<evidence type="ECO:0007829" key="5">
    <source>
        <dbReference type="PDB" id="1S83"/>
    </source>
</evidence>
<evidence type="ECO:0007829" key="6">
    <source>
        <dbReference type="PDB" id="2A31"/>
    </source>
</evidence>
<evidence type="ECO:0007829" key="7">
    <source>
        <dbReference type="PDB" id="3MYW"/>
    </source>
</evidence>
<dbReference type="EC" id="3.4.21.4"/>
<dbReference type="PIR" id="A90641">
    <property type="entry name" value="TRPGTR"/>
</dbReference>
<dbReference type="PDB" id="1AKS">
    <property type="method" value="X-ray"/>
    <property type="resolution" value="1.80 A"/>
    <property type="chains" value="A=9-133, B=134-231"/>
</dbReference>
<dbReference type="PDB" id="1AN1">
    <property type="method" value="X-ray"/>
    <property type="resolution" value="2.03 A"/>
    <property type="chains" value="E=9-231"/>
</dbReference>
<dbReference type="PDB" id="1AVW">
    <property type="method" value="X-ray"/>
    <property type="resolution" value="1.75 A"/>
    <property type="chains" value="A=9-231"/>
</dbReference>
<dbReference type="PDB" id="1AVX">
    <property type="method" value="X-ray"/>
    <property type="resolution" value="1.90 A"/>
    <property type="chains" value="A=9-231"/>
</dbReference>
<dbReference type="PDB" id="1C9P">
    <property type="method" value="X-ray"/>
    <property type="resolution" value="2.80 A"/>
    <property type="chains" value="A=9-231"/>
</dbReference>
<dbReference type="PDB" id="1EJA">
    <property type="method" value="X-ray"/>
    <property type="resolution" value="2.70 A"/>
    <property type="chains" value="A=9-231"/>
</dbReference>
<dbReference type="PDB" id="1EPT">
    <property type="method" value="X-ray"/>
    <property type="resolution" value="1.80 A"/>
    <property type="chains" value="A=9-51, B=52-133, C=134-231"/>
</dbReference>
<dbReference type="PDB" id="1FMG">
    <property type="method" value="X-ray"/>
    <property type="resolution" value="1.90 A"/>
    <property type="chains" value="A=9-231"/>
</dbReference>
<dbReference type="PDB" id="1FN6">
    <property type="method" value="X-ray"/>
    <property type="resolution" value="1.80 A"/>
    <property type="chains" value="A=9-231"/>
</dbReference>
<dbReference type="PDB" id="1FNI">
    <property type="method" value="X-ray"/>
    <property type="resolution" value="1.60 A"/>
    <property type="chains" value="A=9-231"/>
</dbReference>
<dbReference type="PDB" id="1H9H">
    <property type="method" value="X-ray"/>
    <property type="resolution" value="1.50 A"/>
    <property type="chains" value="E=9-231"/>
</dbReference>
<dbReference type="PDB" id="1H9I">
    <property type="method" value="X-ray"/>
    <property type="resolution" value="1.90 A"/>
    <property type="chains" value="E=9-231"/>
</dbReference>
<dbReference type="PDB" id="1LDT">
    <property type="method" value="X-ray"/>
    <property type="resolution" value="1.90 A"/>
    <property type="chains" value="T=9-231"/>
</dbReference>
<dbReference type="PDB" id="1MCT">
    <property type="method" value="X-ray"/>
    <property type="resolution" value="1.60 A"/>
    <property type="chains" value="A=9-231"/>
</dbReference>
<dbReference type="PDB" id="1QQU">
    <property type="method" value="X-ray"/>
    <property type="resolution" value="1.63 A"/>
    <property type="chains" value="A=9-231"/>
</dbReference>
<dbReference type="PDB" id="1S5S">
    <property type="method" value="X-ray"/>
    <property type="resolution" value="1.40 A"/>
    <property type="chains" value="A=9-231"/>
</dbReference>
<dbReference type="PDB" id="1S6F">
    <property type="method" value="X-ray"/>
    <property type="resolution" value="1.80 A"/>
    <property type="chains" value="A=9-231"/>
</dbReference>
<dbReference type="PDB" id="1S6H">
    <property type="method" value="X-ray"/>
    <property type="resolution" value="1.45 A"/>
    <property type="chains" value="A=9-231"/>
</dbReference>
<dbReference type="PDB" id="1S81">
    <property type="method" value="X-ray"/>
    <property type="resolution" value="1.70 A"/>
    <property type="chains" value="A=9-231"/>
</dbReference>
<dbReference type="PDB" id="1S82">
    <property type="method" value="X-ray"/>
    <property type="resolution" value="1.85 A"/>
    <property type="chains" value="A=9-231"/>
</dbReference>
<dbReference type="PDB" id="1S83">
    <property type="method" value="X-ray"/>
    <property type="resolution" value="1.25 A"/>
    <property type="chains" value="A=9-231"/>
</dbReference>
<dbReference type="PDB" id="1S84">
    <property type="method" value="X-ray"/>
    <property type="resolution" value="1.85 A"/>
    <property type="chains" value="A=9-231"/>
</dbReference>
<dbReference type="PDB" id="1S85">
    <property type="method" value="X-ray"/>
    <property type="resolution" value="2.20 A"/>
    <property type="chains" value="A=9-231"/>
</dbReference>
<dbReference type="PDB" id="1TFX">
    <property type="method" value="X-ray"/>
    <property type="resolution" value="2.60 A"/>
    <property type="chains" value="A/B=9-231"/>
</dbReference>
<dbReference type="PDB" id="1TX6">
    <property type="method" value="X-ray"/>
    <property type="resolution" value="2.20 A"/>
    <property type="chains" value="A/B/C/D=9-231"/>
</dbReference>
<dbReference type="PDB" id="1UHB">
    <property type="method" value="X-ray"/>
    <property type="resolution" value="2.15 A"/>
    <property type="chains" value="A=9-133, B=134-231, P=177-185"/>
</dbReference>
<dbReference type="PDB" id="1V6D">
    <property type="method" value="X-ray"/>
    <property type="resolution" value="1.90 A"/>
    <property type="chains" value="A=9-231"/>
</dbReference>
<dbReference type="PDB" id="1YF4">
    <property type="method" value="X-ray"/>
    <property type="resolution" value="1.98 A"/>
    <property type="chains" value="A=9-231"/>
</dbReference>
<dbReference type="PDB" id="1Z7K">
    <property type="method" value="X-ray"/>
    <property type="resolution" value="1.90 A"/>
    <property type="chains" value="A=9-231"/>
</dbReference>
<dbReference type="PDB" id="2A31">
    <property type="method" value="X-ray"/>
    <property type="resolution" value="1.25 A"/>
    <property type="chains" value="A=9-231"/>
</dbReference>
<dbReference type="PDB" id="2A32">
    <property type="method" value="X-ray"/>
    <property type="resolution" value="1.50 A"/>
    <property type="chains" value="A=9-231"/>
</dbReference>
<dbReference type="PDB" id="3MYW">
    <property type="method" value="X-ray"/>
    <property type="resolution" value="2.50 A"/>
    <property type="chains" value="A/B=9-231"/>
</dbReference>
<dbReference type="PDB" id="4AN7">
    <property type="method" value="X-ray"/>
    <property type="resolution" value="2.23 A"/>
    <property type="chains" value="A=1-231"/>
</dbReference>
<dbReference type="PDB" id="4DOQ">
    <property type="method" value="X-ray"/>
    <property type="resolution" value="2.00 A"/>
    <property type="chains" value="A/C/E=9-231"/>
</dbReference>
<dbReference type="PDB" id="5XWJ">
    <property type="method" value="X-ray"/>
    <property type="resolution" value="1.80 A"/>
    <property type="chains" value="A/B=1-231"/>
</dbReference>
<dbReference type="PDB" id="5XWL">
    <property type="method" value="X-ray"/>
    <property type="resolution" value="2.10 A"/>
    <property type="chains" value="A/B=1-231"/>
</dbReference>
<dbReference type="PDBsum" id="1AKS"/>
<dbReference type="PDBsum" id="1AN1"/>
<dbReference type="PDBsum" id="1AVW"/>
<dbReference type="PDBsum" id="1AVX"/>
<dbReference type="PDBsum" id="1C9P"/>
<dbReference type="PDBsum" id="1EJA"/>
<dbReference type="PDBsum" id="1EPT"/>
<dbReference type="PDBsum" id="1FMG"/>
<dbReference type="PDBsum" id="1FN6"/>
<dbReference type="PDBsum" id="1FNI"/>
<dbReference type="PDBsum" id="1H9H"/>
<dbReference type="PDBsum" id="1H9I"/>
<dbReference type="PDBsum" id="1LDT"/>
<dbReference type="PDBsum" id="1MCT"/>
<dbReference type="PDBsum" id="1QQU"/>
<dbReference type="PDBsum" id="1S5S"/>
<dbReference type="PDBsum" id="1S6F"/>
<dbReference type="PDBsum" id="1S6H"/>
<dbReference type="PDBsum" id="1S81"/>
<dbReference type="PDBsum" id="1S82"/>
<dbReference type="PDBsum" id="1S83"/>
<dbReference type="PDBsum" id="1S84"/>
<dbReference type="PDBsum" id="1S85"/>
<dbReference type="PDBsum" id="1TFX"/>
<dbReference type="PDBsum" id="1TX6"/>
<dbReference type="PDBsum" id="1UHB"/>
<dbReference type="PDBsum" id="1V6D"/>
<dbReference type="PDBsum" id="1YF4"/>
<dbReference type="PDBsum" id="1Z7K"/>
<dbReference type="PDBsum" id="2A31"/>
<dbReference type="PDBsum" id="2A32"/>
<dbReference type="PDBsum" id="3MYW"/>
<dbReference type="PDBsum" id="4AN7"/>
<dbReference type="PDBsum" id="4DOQ"/>
<dbReference type="PDBsum" id="5XWJ"/>
<dbReference type="PDBsum" id="5XWL"/>
<dbReference type="SMR" id="P00761"/>
<dbReference type="DIP" id="DIP-6083N"/>
<dbReference type="FunCoup" id="P00761">
    <property type="interactions" value="32"/>
</dbReference>
<dbReference type="IntAct" id="P00761">
    <property type="interactions" value="5"/>
</dbReference>
<dbReference type="MINT" id="P00761"/>
<dbReference type="STRING" id="9823.ENSSSCP00000045861"/>
<dbReference type="BindingDB" id="P00761"/>
<dbReference type="ChEMBL" id="CHEMBL2366"/>
<dbReference type="DrugCentral" id="P00761"/>
<dbReference type="GlyGen" id="P00761">
    <property type="glycosylation" value="1 site, 1 O-linked glycan (1 site)"/>
</dbReference>
<dbReference type="PaxDb" id="9823-ENSSSCP00000017465"/>
<dbReference type="PeptideAtlas" id="P00761"/>
<dbReference type="PRIDE" id="P00761"/>
<dbReference type="eggNOG" id="KOG3627">
    <property type="taxonomic scope" value="Eukaryota"/>
</dbReference>
<dbReference type="HOGENOM" id="CLU_006842_7_0_1"/>
<dbReference type="InParanoid" id="P00761"/>
<dbReference type="BRENDA" id="3.4.21.4">
    <property type="organism ID" value="6170"/>
</dbReference>
<dbReference type="SABIO-RK" id="P00761"/>
<dbReference type="EvolutionaryTrace" id="P00761"/>
<dbReference type="Proteomes" id="UP000008227">
    <property type="component" value="Unplaced"/>
</dbReference>
<dbReference type="Proteomes" id="UP000314985">
    <property type="component" value="Unplaced"/>
</dbReference>
<dbReference type="Proteomes" id="UP000694570">
    <property type="component" value="Unplaced"/>
</dbReference>
<dbReference type="Proteomes" id="UP000694571">
    <property type="component" value="Unplaced"/>
</dbReference>
<dbReference type="Proteomes" id="UP000694720">
    <property type="component" value="Unplaced"/>
</dbReference>
<dbReference type="Proteomes" id="UP000694722">
    <property type="component" value="Unplaced"/>
</dbReference>
<dbReference type="Proteomes" id="UP000694723">
    <property type="component" value="Unplaced"/>
</dbReference>
<dbReference type="Proteomes" id="UP000694724">
    <property type="component" value="Unplaced"/>
</dbReference>
<dbReference type="Proteomes" id="UP000694725">
    <property type="component" value="Unplaced"/>
</dbReference>
<dbReference type="Proteomes" id="UP000694726">
    <property type="component" value="Unplaced"/>
</dbReference>
<dbReference type="Proteomes" id="UP000694727">
    <property type="component" value="Unplaced"/>
</dbReference>
<dbReference type="Proteomes" id="UP000694728">
    <property type="component" value="Unplaced"/>
</dbReference>
<dbReference type="GO" id="GO:0005615">
    <property type="term" value="C:extracellular space"/>
    <property type="evidence" value="ECO:0000318"/>
    <property type="project" value="GO_Central"/>
</dbReference>
<dbReference type="GO" id="GO:0046872">
    <property type="term" value="F:metal ion binding"/>
    <property type="evidence" value="ECO:0007669"/>
    <property type="project" value="UniProtKB-KW"/>
</dbReference>
<dbReference type="GO" id="GO:0004252">
    <property type="term" value="F:serine-type endopeptidase activity"/>
    <property type="evidence" value="ECO:0000314"/>
    <property type="project" value="CAFA"/>
</dbReference>
<dbReference type="GO" id="GO:0007586">
    <property type="term" value="P:digestion"/>
    <property type="evidence" value="ECO:0007669"/>
    <property type="project" value="UniProtKB-KW"/>
</dbReference>
<dbReference type="GO" id="GO:0006508">
    <property type="term" value="P:proteolysis"/>
    <property type="evidence" value="ECO:0007669"/>
    <property type="project" value="UniProtKB-KW"/>
</dbReference>
<dbReference type="CDD" id="cd00190">
    <property type="entry name" value="Tryp_SPc"/>
    <property type="match status" value="1"/>
</dbReference>
<dbReference type="FunFam" id="2.40.10.10:FF:000019">
    <property type="entry name" value="Anionic trypsin"/>
    <property type="match status" value="1"/>
</dbReference>
<dbReference type="Gene3D" id="2.40.10.10">
    <property type="entry name" value="Trypsin-like serine proteases"/>
    <property type="match status" value="2"/>
</dbReference>
<dbReference type="InterPro" id="IPR009003">
    <property type="entry name" value="Peptidase_S1_PA"/>
</dbReference>
<dbReference type="InterPro" id="IPR043504">
    <property type="entry name" value="Peptidase_S1_PA_chymotrypsin"/>
</dbReference>
<dbReference type="InterPro" id="IPR001314">
    <property type="entry name" value="Peptidase_S1A"/>
</dbReference>
<dbReference type="InterPro" id="IPR050127">
    <property type="entry name" value="Serine_Proteases_S1"/>
</dbReference>
<dbReference type="InterPro" id="IPR001254">
    <property type="entry name" value="Trypsin_dom"/>
</dbReference>
<dbReference type="InterPro" id="IPR018114">
    <property type="entry name" value="TRYPSIN_HIS"/>
</dbReference>
<dbReference type="InterPro" id="IPR033116">
    <property type="entry name" value="TRYPSIN_SER"/>
</dbReference>
<dbReference type="PANTHER" id="PTHR24264:SF15">
    <property type="entry name" value="RIKEN CDNA 2210010C04 GENE"/>
    <property type="match status" value="1"/>
</dbReference>
<dbReference type="PANTHER" id="PTHR24264">
    <property type="entry name" value="TRYPSIN-RELATED"/>
    <property type="match status" value="1"/>
</dbReference>
<dbReference type="Pfam" id="PF00089">
    <property type="entry name" value="Trypsin"/>
    <property type="match status" value="1"/>
</dbReference>
<dbReference type="PRINTS" id="PR00722">
    <property type="entry name" value="CHYMOTRYPSIN"/>
</dbReference>
<dbReference type="SMART" id="SM00020">
    <property type="entry name" value="Tryp_SPc"/>
    <property type="match status" value="1"/>
</dbReference>
<dbReference type="SUPFAM" id="SSF50494">
    <property type="entry name" value="Trypsin-like serine proteases"/>
    <property type="match status" value="1"/>
</dbReference>
<dbReference type="PROSITE" id="PS50240">
    <property type="entry name" value="TRYPSIN_DOM"/>
    <property type="match status" value="1"/>
</dbReference>
<dbReference type="PROSITE" id="PS00134">
    <property type="entry name" value="TRYPSIN_HIS"/>
    <property type="match status" value="1"/>
</dbReference>
<dbReference type="PROSITE" id="PS00135">
    <property type="entry name" value="TRYPSIN_SER"/>
    <property type="match status" value="1"/>
</dbReference>
<proteinExistence type="evidence at protein level"/>
<keyword id="KW-0002">3D-structure</keyword>
<keyword id="KW-0106">Calcium</keyword>
<keyword id="KW-0222">Digestion</keyword>
<keyword id="KW-0903">Direct protein sequencing</keyword>
<keyword id="KW-1015">Disulfide bond</keyword>
<keyword id="KW-0378">Hydrolase</keyword>
<keyword id="KW-0479">Metal-binding</keyword>
<keyword id="KW-0645">Protease</keyword>
<keyword id="KW-1185">Reference proteome</keyword>
<keyword id="KW-0964">Secreted</keyword>
<keyword id="KW-0720">Serine protease</keyword>
<keyword id="KW-0865">Zymogen</keyword>
<sequence length="231" mass="24409">FPTDDDDKIVGGYTCAANSIPYQVSLNSGSHFCGGSLINSQWVVSAAHCYKSRIQVRLGEHNIDVLEGNEQFINAAKIITHPNFNGNTLDNDIMLIKLSSPATLNSRVATVSLPRSCAAAGTECLISGWGNTKSSGSSYPSLLQCLKAPVLSDSSCKSSYPGQITGNMICVGFLEGGKDSCQGDSGGPVVCNGQLQGIVSWGYGCAQKNKPGVYTKVCNYVNWIQQTIAAN</sequence>
<protein>
    <recommendedName>
        <fullName>Trypsin</fullName>
        <ecNumber>3.4.21.4</ecNumber>
    </recommendedName>
</protein>
<accession>P00761</accession>